<keyword id="KW-0687">Ribonucleoprotein</keyword>
<keyword id="KW-0689">Ribosomal protein</keyword>
<keyword id="KW-0694">RNA-binding</keyword>
<keyword id="KW-0699">rRNA-binding</keyword>
<protein>
    <recommendedName>
        <fullName evidence="1">Large ribosomal subunit protein uL23</fullName>
    </recommendedName>
    <alternativeName>
        <fullName evidence="2">50S ribosomal protein L23</fullName>
    </alternativeName>
</protein>
<evidence type="ECO:0000255" key="1">
    <source>
        <dbReference type="HAMAP-Rule" id="MF_01369"/>
    </source>
</evidence>
<evidence type="ECO:0000305" key="2"/>
<reference key="1">
    <citation type="journal article" date="2009" name="Genome Biol.">
        <title>Genomic and genetic analyses of diversity and plant interactions of Pseudomonas fluorescens.</title>
        <authorList>
            <person name="Silby M.W."/>
            <person name="Cerdeno-Tarraga A.M."/>
            <person name="Vernikos G.S."/>
            <person name="Giddens S.R."/>
            <person name="Jackson R.W."/>
            <person name="Preston G.M."/>
            <person name="Zhang X.-X."/>
            <person name="Moon C.D."/>
            <person name="Gehrig S.M."/>
            <person name="Godfrey S.A.C."/>
            <person name="Knight C.G."/>
            <person name="Malone J.G."/>
            <person name="Robinson Z."/>
            <person name="Spiers A.J."/>
            <person name="Harris S."/>
            <person name="Challis G.L."/>
            <person name="Yaxley A.M."/>
            <person name="Harris D."/>
            <person name="Seeger K."/>
            <person name="Murphy L."/>
            <person name="Rutter S."/>
            <person name="Squares R."/>
            <person name="Quail M.A."/>
            <person name="Saunders E."/>
            <person name="Mavromatis K."/>
            <person name="Brettin T.S."/>
            <person name="Bentley S.D."/>
            <person name="Hothersall J."/>
            <person name="Stephens E."/>
            <person name="Thomas C.M."/>
            <person name="Parkhill J."/>
            <person name="Levy S.B."/>
            <person name="Rainey P.B."/>
            <person name="Thomson N.R."/>
        </authorList>
    </citation>
    <scope>NUCLEOTIDE SEQUENCE [LARGE SCALE GENOMIC DNA]</scope>
    <source>
        <strain>SBW25</strain>
    </source>
</reference>
<comment type="function">
    <text evidence="1">One of the early assembly proteins it binds 23S rRNA. One of the proteins that surrounds the polypeptide exit tunnel on the outside of the ribosome. Forms the main docking site for trigger factor binding to the ribosome.</text>
</comment>
<comment type="subunit">
    <text evidence="1">Part of the 50S ribosomal subunit. Contacts protein L29, and trigger factor when it is bound to the ribosome.</text>
</comment>
<comment type="similarity">
    <text evidence="1">Belongs to the universal ribosomal protein uL23 family.</text>
</comment>
<accession>C3K2X4</accession>
<proteinExistence type="inferred from homology"/>
<gene>
    <name evidence="1" type="primary">rplW</name>
    <name type="ordered locus">PFLU_5525</name>
</gene>
<feature type="chain" id="PRO_1000215041" description="Large ribosomal subunit protein uL23">
    <location>
        <begin position="1"/>
        <end position="99"/>
    </location>
</feature>
<sequence length="99" mass="10945">MNQERVFKVLLGPHVSEKATVLADKKGQFVFKVATDATKLEIKKAVESLFSVKVERVTTLNVLGKSKRTARGLGKRNDWKKAVISLQPGQDLDFSSSAE</sequence>
<organism>
    <name type="scientific">Pseudomonas fluorescens (strain SBW25)</name>
    <dbReference type="NCBI Taxonomy" id="216595"/>
    <lineage>
        <taxon>Bacteria</taxon>
        <taxon>Pseudomonadati</taxon>
        <taxon>Pseudomonadota</taxon>
        <taxon>Gammaproteobacteria</taxon>
        <taxon>Pseudomonadales</taxon>
        <taxon>Pseudomonadaceae</taxon>
        <taxon>Pseudomonas</taxon>
    </lineage>
</organism>
<name>RL23_PSEFS</name>
<dbReference type="EMBL" id="AM181176">
    <property type="protein sequence ID" value="CAY52763.1"/>
    <property type="molecule type" value="Genomic_DNA"/>
</dbReference>
<dbReference type="RefSeq" id="WP_002555488.1">
    <property type="nucleotide sequence ID" value="NC_012660.1"/>
</dbReference>
<dbReference type="SMR" id="C3K2X4"/>
<dbReference type="STRING" id="294.SRM1_05177"/>
<dbReference type="GeneID" id="98113705"/>
<dbReference type="eggNOG" id="COG0089">
    <property type="taxonomic scope" value="Bacteria"/>
</dbReference>
<dbReference type="HOGENOM" id="CLU_037562_3_1_6"/>
<dbReference type="OrthoDB" id="9793353at2"/>
<dbReference type="GO" id="GO:1990904">
    <property type="term" value="C:ribonucleoprotein complex"/>
    <property type="evidence" value="ECO:0007669"/>
    <property type="project" value="UniProtKB-KW"/>
</dbReference>
<dbReference type="GO" id="GO:0005840">
    <property type="term" value="C:ribosome"/>
    <property type="evidence" value="ECO:0007669"/>
    <property type="project" value="UniProtKB-KW"/>
</dbReference>
<dbReference type="GO" id="GO:0019843">
    <property type="term" value="F:rRNA binding"/>
    <property type="evidence" value="ECO:0007669"/>
    <property type="project" value="UniProtKB-UniRule"/>
</dbReference>
<dbReference type="GO" id="GO:0003735">
    <property type="term" value="F:structural constituent of ribosome"/>
    <property type="evidence" value="ECO:0007669"/>
    <property type="project" value="InterPro"/>
</dbReference>
<dbReference type="GO" id="GO:0006412">
    <property type="term" value="P:translation"/>
    <property type="evidence" value="ECO:0007669"/>
    <property type="project" value="UniProtKB-UniRule"/>
</dbReference>
<dbReference type="FunFam" id="3.30.70.330:FF:000001">
    <property type="entry name" value="50S ribosomal protein L23"/>
    <property type="match status" value="1"/>
</dbReference>
<dbReference type="Gene3D" id="3.30.70.330">
    <property type="match status" value="1"/>
</dbReference>
<dbReference type="HAMAP" id="MF_01369_B">
    <property type="entry name" value="Ribosomal_uL23_B"/>
    <property type="match status" value="1"/>
</dbReference>
<dbReference type="InterPro" id="IPR012677">
    <property type="entry name" value="Nucleotide-bd_a/b_plait_sf"/>
</dbReference>
<dbReference type="InterPro" id="IPR013025">
    <property type="entry name" value="Ribosomal_uL23-like"/>
</dbReference>
<dbReference type="InterPro" id="IPR012678">
    <property type="entry name" value="Ribosomal_uL23/eL15/eS24_sf"/>
</dbReference>
<dbReference type="NCBIfam" id="NF004359">
    <property type="entry name" value="PRK05738.1-3"/>
    <property type="match status" value="1"/>
</dbReference>
<dbReference type="NCBIfam" id="NF004363">
    <property type="entry name" value="PRK05738.2-4"/>
    <property type="match status" value="1"/>
</dbReference>
<dbReference type="PANTHER" id="PTHR11620">
    <property type="entry name" value="60S RIBOSOMAL PROTEIN L23A"/>
    <property type="match status" value="1"/>
</dbReference>
<dbReference type="Pfam" id="PF00276">
    <property type="entry name" value="Ribosomal_L23"/>
    <property type="match status" value="1"/>
</dbReference>
<dbReference type="SUPFAM" id="SSF54189">
    <property type="entry name" value="Ribosomal proteins S24e, L23 and L15e"/>
    <property type="match status" value="1"/>
</dbReference>